<comment type="function">
    <text evidence="1 8">Guanylate cyclase involved in the production of the second messenger cGMP (By similarity). Unlike other guanylate cyclases expressed in ASE neurons, may not play a role in chemotaxis responses toward salt ions in ASEL (ASE left) sensory neurons (PubMed:19523832).</text>
</comment>
<comment type="catalytic activity">
    <reaction evidence="1">
        <text>GTP = 3',5'-cyclic GMP + diphosphate</text>
        <dbReference type="Rhea" id="RHEA:13665"/>
        <dbReference type="ChEBI" id="CHEBI:33019"/>
        <dbReference type="ChEBI" id="CHEBI:37565"/>
        <dbReference type="ChEBI" id="CHEBI:57746"/>
        <dbReference type="EC" id="4.6.1.2"/>
    </reaction>
</comment>
<comment type="subcellular location">
    <subcellularLocation>
        <location evidence="9">Cell membrane</location>
        <topology evidence="9">Single-pass type I membrane protein</topology>
    </subcellularLocation>
</comment>
<comment type="alternative products">
    <event type="alternative splicing"/>
    <isoform>
        <id>H2L002-1</id>
        <name evidence="11">a</name>
        <sequence type="displayed"/>
    </isoform>
    <isoform>
        <id>H2L002-2</id>
        <name evidence="12">b</name>
        <sequence type="described" ref="VSP_057700 VSP_057701"/>
    </isoform>
</comment>
<comment type="tissue specificity">
    <text evidence="6 7">Expressed asymmetrically in ASE left (ASEL) sensory neuron (PubMed:16099833, PubMed:16547101). Expressed in excretory canal cell (PubMed:16547101).</text>
</comment>
<comment type="developmental stage">
    <text evidence="6">Expressed in both ASEL and ASER neurons throughout late embryonic and early larval stages.</text>
</comment>
<comment type="domain">
    <text evidence="4">The protein kinase domain is predicted to be catalytically inactive.</text>
</comment>
<comment type="similarity">
    <text evidence="3">Belongs to the adenylyl cyclase class-4/guanylyl cyclase family.</text>
</comment>
<sequence>MKPFYSMSLVLFLVITLLPKPMFPQVATGTTGNVIRVGFIHCRDFQSAPITVGYRTSAAAASIAVDRLKRENLMSGWEFNFTIEFDDCVESEAAGMTVDLIEKHNVDVIIGPTMNQPTLAAFIVSNYFNRPIIAWGLVNAAQLDDFERFPNAGILSAGQRSLGVAIRAVLKRYEWSQFVYAYFTEEDTEKCVTMRNDLQQVVSYFGDIILAYSIQVADISNDGMIEALKKIQSRGRIIVTCMKDGIGLRRKWLLAAEEAGMIGDEYVYVFSDIKSKGYVVPLLGGGERPSWILSTGSDENDTRALKAFKQSIFICDMMGQGSIATNYTIFGQEIIARMKEAPYFCTKDCEGENFTVAATYAGQLHDAVYAYGVALDKMLKAGQIAQYRNATAFMRYFPQSFIGMSGNVTINEKGTRNPTLFLLALDENNNNTRMATIYVENMSATFNALYSDEGVMWASRKNNARPVDVPLCGFTGNLCPKSFVDEYLIWVIVAIVVLFLAITAAACGIYFSIQARRQEIERLNRLWQIPFIHLHQINSKQKGKGEHSVRSLQSGTSTLSSRTTVSFKTESRNFLFFSLQRESDYEPVVAKKHAYRPRLDDDKCTFMRSLRNLDQDNLNRFIGLCLDGPQMLSVWRFCSRGSIADVILKATIQMDNFFIYSLIKDMVHGLVFLHGSMVGYHGMLTSKCCLIDDRWQVKISNYGLQDLRSPEMYEKKDLLWSAPELLRAEDIKGSKEGDVYSLGIICAELITRKGVFNMEDRKEDPEEIIYLLKKGGLKSPRPDLEYDHTIEINPALLHLVRDCFTERPSERPSIETVRSQLRGMNSSRNDNLMDHVFNMLESYASSLEEEVSERTKELVEEKKKSDVLLYRMLPKTVADKLKLGQTVEPETFEQVTIFFSDVVQFTTLASKCTPLQVVNLLNDLYTIFDGIIEKHDVYKVETIGDGYLCVSGLPHRNGNEHVRQIALMSLAFLSSLQFFRVPHLPSERINLRIGMNCGSVVAGVVGLTMPRFCLFGDAVNTASRMESNGKPGKIHVSAEANRMLHLVGGFDTESRGEVIIKGKGVMETFWLTGQGTGAVSGARHVSAKKVSKKMDEIHRQETLKSDEQLSD</sequence>
<protein>
    <recommendedName>
        <fullName evidence="9">Receptor-type guanylate cyclase gcy-7</fullName>
        <ecNumber evidence="1">4.6.1.2</ecNumber>
    </recommendedName>
</protein>
<name>GCY7_CAEEL</name>
<organism evidence="10">
    <name type="scientific">Caenorhabditis elegans</name>
    <dbReference type="NCBI Taxonomy" id="6239"/>
    <lineage>
        <taxon>Eukaryota</taxon>
        <taxon>Metazoa</taxon>
        <taxon>Ecdysozoa</taxon>
        <taxon>Nematoda</taxon>
        <taxon>Chromadorea</taxon>
        <taxon>Rhabditida</taxon>
        <taxon>Rhabditina</taxon>
        <taxon>Rhabditomorpha</taxon>
        <taxon>Rhabditoidea</taxon>
        <taxon>Rhabditidae</taxon>
        <taxon>Peloderinae</taxon>
        <taxon>Caenorhabditis</taxon>
    </lineage>
</organism>
<reference evidence="10" key="1">
    <citation type="journal article" date="1998" name="Science">
        <title>Genome sequence of the nematode C. elegans: a platform for investigating biology.</title>
        <authorList>
            <consortium name="The C. elegans sequencing consortium"/>
        </authorList>
    </citation>
    <scope>NUCLEOTIDE SEQUENCE [LARGE SCALE GENOMIC DNA]</scope>
    <source>
        <strain evidence="10">Bristol N2</strain>
    </source>
</reference>
<reference evidence="9" key="2">
    <citation type="journal article" date="2005" name="Proc. Natl. Acad. Sci. U.S.A.">
        <title>MicroRNAs acting in a double-negative feedback loop to control a neuronal cell fate decision.</title>
        <authorList>
            <person name="Johnston R.J. Jr."/>
            <person name="Chang S."/>
            <person name="Etchberger J.F."/>
            <person name="Ortiz C.O."/>
            <person name="Hobert O."/>
        </authorList>
    </citation>
    <scope>TISSUE SPECIFICITY</scope>
    <scope>DEVELOPMENTAL STAGE</scope>
</reference>
<reference evidence="9" key="3">
    <citation type="journal article" date="2006" name="Genetics">
        <title>Searching for neuronal left/right asymmetry: genomewide analysis of nematode receptor-type guanylyl cyclases.</title>
        <authorList>
            <person name="Ortiz C.O."/>
            <person name="Etchberger J.F."/>
            <person name="Posy S.L."/>
            <person name="Frokjaer-Jensen C."/>
            <person name="Lockery S."/>
            <person name="Honig B."/>
            <person name="Hobert O."/>
        </authorList>
    </citation>
    <scope>TISSUE SPECIFICITY</scope>
</reference>
<reference evidence="9" key="4">
    <citation type="journal article" date="2009" name="Curr. Biol.">
        <title>Lateralized gustatory behavior of C. elegans is controlled by specific receptor-type guanylyl cyclases.</title>
        <authorList>
            <person name="Ortiz C.O."/>
            <person name="Faumont S."/>
            <person name="Takayama J."/>
            <person name="Ahmed H.K."/>
            <person name="Goldsmith A.D."/>
            <person name="Pocock R."/>
            <person name="McCormick K.E."/>
            <person name="Kunimoto H."/>
            <person name="Iino Y."/>
            <person name="Lockery S."/>
            <person name="Hobert O."/>
        </authorList>
    </citation>
    <scope>FUNCTION</scope>
</reference>
<feature type="signal peptide" evidence="2">
    <location>
        <begin position="1"/>
        <end position="24"/>
    </location>
</feature>
<feature type="chain" id="PRO_0000433276" description="Receptor-type guanylate cyclase gcy-7" evidence="2">
    <location>
        <begin position="25"/>
        <end position="1111"/>
    </location>
</feature>
<feature type="topological domain" description="Extracellular" evidence="2">
    <location>
        <begin position="25"/>
        <end position="488"/>
    </location>
</feature>
<feature type="transmembrane region" description="Helical" evidence="2">
    <location>
        <begin position="489"/>
        <end position="509"/>
    </location>
</feature>
<feature type="topological domain" description="Cytoplasmic" evidence="2">
    <location>
        <begin position="510"/>
        <end position="1111"/>
    </location>
</feature>
<feature type="domain" description="Protein kinase" evidence="4">
    <location>
        <begin position="536"/>
        <end position="838"/>
    </location>
</feature>
<feature type="domain" description="Guanylate cyclase" evidence="3">
    <location>
        <begin position="896"/>
        <end position="1026"/>
    </location>
</feature>
<feature type="binding site" evidence="4">
    <location>
        <begin position="542"/>
        <end position="550"/>
    </location>
    <ligand>
        <name>ATP</name>
        <dbReference type="ChEBI" id="CHEBI:30616"/>
    </ligand>
</feature>
<feature type="binding site" evidence="4">
    <location>
        <position position="568"/>
    </location>
    <ligand>
        <name>ATP</name>
        <dbReference type="ChEBI" id="CHEBI:30616"/>
    </ligand>
</feature>
<feature type="glycosylation site" description="N-linked (GlcNAc...) asparagine" evidence="5">
    <location>
        <position position="80"/>
    </location>
</feature>
<feature type="glycosylation site" description="N-linked (GlcNAc...) asparagine" evidence="5">
    <location>
        <position position="300"/>
    </location>
</feature>
<feature type="glycosylation site" description="N-linked (GlcNAc...) asparagine" evidence="5">
    <location>
        <position position="326"/>
    </location>
</feature>
<feature type="glycosylation site" description="N-linked (GlcNAc...) asparagine" evidence="5">
    <location>
        <position position="353"/>
    </location>
</feature>
<feature type="glycosylation site" description="N-linked (GlcNAc...) asparagine" evidence="5">
    <location>
        <position position="389"/>
    </location>
</feature>
<feature type="glycosylation site" description="N-linked (GlcNAc...) asparagine" evidence="5">
    <location>
        <position position="407"/>
    </location>
</feature>
<feature type="glycosylation site" description="N-linked (GlcNAc...) asparagine" evidence="5">
    <location>
        <position position="430"/>
    </location>
</feature>
<feature type="glycosylation site" description="N-linked (GlcNAc...) asparagine" evidence="5">
    <location>
        <position position="441"/>
    </location>
</feature>
<feature type="splice variant" id="VSP_057700" description="In isoform b." evidence="9">
    <original>PGKIHVSAEANRMLH</original>
    <variation>RMDFGFPPFSDKLNI</variation>
    <location>
        <begin position="1031"/>
        <end position="1045"/>
    </location>
</feature>
<feature type="splice variant" id="VSP_057701" description="In isoform b." evidence="9">
    <location>
        <begin position="1046"/>
        <end position="1111"/>
    </location>
</feature>
<accession>H2L002</accession>
<accession>Q7JP50</accession>
<evidence type="ECO:0000250" key="1">
    <source>
        <dbReference type="UniProtKB" id="Q19187"/>
    </source>
</evidence>
<evidence type="ECO:0000255" key="2"/>
<evidence type="ECO:0000255" key="3">
    <source>
        <dbReference type="PROSITE-ProRule" id="PRU00099"/>
    </source>
</evidence>
<evidence type="ECO:0000255" key="4">
    <source>
        <dbReference type="PROSITE-ProRule" id="PRU00159"/>
    </source>
</evidence>
<evidence type="ECO:0000255" key="5">
    <source>
        <dbReference type="PROSITE-ProRule" id="PRU00498"/>
    </source>
</evidence>
<evidence type="ECO:0000269" key="6">
    <source>
    </source>
</evidence>
<evidence type="ECO:0000269" key="7">
    <source>
    </source>
</evidence>
<evidence type="ECO:0000269" key="8">
    <source>
    </source>
</evidence>
<evidence type="ECO:0000305" key="9"/>
<evidence type="ECO:0000312" key="10">
    <source>
        <dbReference type="Proteomes" id="UP000001940"/>
    </source>
</evidence>
<evidence type="ECO:0000312" key="11">
    <source>
        <dbReference type="WormBase" id="F52E1.4a"/>
    </source>
</evidence>
<evidence type="ECO:0000312" key="12">
    <source>
        <dbReference type="WormBase" id="F52E1.4b"/>
    </source>
</evidence>
<proteinExistence type="evidence at transcript level"/>
<keyword id="KW-0025">Alternative splicing</keyword>
<keyword id="KW-0067">ATP-binding</keyword>
<keyword id="KW-1003">Cell membrane</keyword>
<keyword id="KW-0141">cGMP biosynthesis</keyword>
<keyword id="KW-0325">Glycoprotein</keyword>
<keyword id="KW-0456">Lyase</keyword>
<keyword id="KW-0472">Membrane</keyword>
<keyword id="KW-0547">Nucleotide-binding</keyword>
<keyword id="KW-0675">Receptor</keyword>
<keyword id="KW-1185">Reference proteome</keyword>
<keyword id="KW-0732">Signal</keyword>
<keyword id="KW-0812">Transmembrane</keyword>
<keyword id="KW-1133">Transmembrane helix</keyword>
<gene>
    <name evidence="12" type="primary">gcy-7</name>
    <name evidence="11" type="ORF">F52E1.4</name>
</gene>
<dbReference type="EC" id="4.6.1.2" evidence="1"/>
<dbReference type="EMBL" id="BX284605">
    <property type="protein sequence ID" value="CCD70805.1"/>
    <property type="molecule type" value="Genomic_DNA"/>
</dbReference>
<dbReference type="EMBL" id="BX284605">
    <property type="protein sequence ID" value="CCD70806.1"/>
    <property type="molecule type" value="Genomic_DNA"/>
</dbReference>
<dbReference type="RefSeq" id="NP_001023954.1">
    <molecule id="H2L002-2"/>
    <property type="nucleotide sequence ID" value="NM_001028783.1"/>
</dbReference>
<dbReference type="RefSeq" id="NP_001023955.1">
    <molecule id="H2L002-1"/>
    <property type="nucleotide sequence ID" value="NM_001028784.1"/>
</dbReference>
<dbReference type="SMR" id="H2L002"/>
<dbReference type="FunCoup" id="H2L002">
    <property type="interactions" value="16"/>
</dbReference>
<dbReference type="STRING" id="6239.F52E1.4b.1"/>
<dbReference type="GlyCosmos" id="H2L002">
    <property type="glycosylation" value="8 sites, No reported glycans"/>
</dbReference>
<dbReference type="PaxDb" id="6239-F52E1.4b"/>
<dbReference type="EnsemblMetazoa" id="F52E1.4a.1">
    <molecule id="H2L002-2"/>
    <property type="protein sequence ID" value="F52E1.4a.1"/>
    <property type="gene ID" value="WBGene00001534"/>
</dbReference>
<dbReference type="EnsemblMetazoa" id="F52E1.4b.1">
    <molecule id="H2L002-1"/>
    <property type="protein sequence ID" value="F52E1.4b.1"/>
    <property type="gene ID" value="WBGene00001534"/>
</dbReference>
<dbReference type="GeneID" id="179222"/>
<dbReference type="KEGG" id="cel:CELE_F52E1.4"/>
<dbReference type="UCSC" id="F52E1.4a">
    <property type="organism name" value="c. elegans"/>
</dbReference>
<dbReference type="AGR" id="WB:WBGene00001534"/>
<dbReference type="CTD" id="179222"/>
<dbReference type="WormBase" id="F52E1.4a">
    <molecule id="H2L002-2"/>
    <property type="protein sequence ID" value="CE35321"/>
    <property type="gene ID" value="WBGene00001534"/>
    <property type="gene designation" value="gcy-7"/>
</dbReference>
<dbReference type="WormBase" id="F52E1.4b">
    <molecule id="H2L002-1"/>
    <property type="protein sequence ID" value="CE35322"/>
    <property type="gene ID" value="WBGene00001534"/>
    <property type="gene designation" value="gcy-7"/>
</dbReference>
<dbReference type="eggNOG" id="KOG1023">
    <property type="taxonomic scope" value="Eukaryota"/>
</dbReference>
<dbReference type="HOGENOM" id="CLU_001072_1_3_1"/>
<dbReference type="InParanoid" id="H2L002"/>
<dbReference type="OMA" id="YVENMSA"/>
<dbReference type="OrthoDB" id="1890790at2759"/>
<dbReference type="PhylomeDB" id="H2L002"/>
<dbReference type="Reactome" id="R-CEL-2514859">
    <property type="pathway name" value="Inactivation, recovery and regulation of the phototransduction cascade"/>
</dbReference>
<dbReference type="SignaLink" id="H2L002"/>
<dbReference type="PRO" id="PR:H2L002"/>
<dbReference type="Proteomes" id="UP000001940">
    <property type="component" value="Chromosome V"/>
</dbReference>
<dbReference type="Bgee" id="WBGene00001534">
    <property type="expression patterns" value="Expressed in larva"/>
</dbReference>
<dbReference type="ExpressionAtlas" id="H2L002">
    <property type="expression patterns" value="baseline and differential"/>
</dbReference>
<dbReference type="GO" id="GO:0005929">
    <property type="term" value="C:cilium"/>
    <property type="evidence" value="ECO:0000314"/>
    <property type="project" value="UniProtKB"/>
</dbReference>
<dbReference type="GO" id="GO:0005886">
    <property type="term" value="C:plasma membrane"/>
    <property type="evidence" value="ECO:0000318"/>
    <property type="project" value="GO_Central"/>
</dbReference>
<dbReference type="GO" id="GO:0005524">
    <property type="term" value="F:ATP binding"/>
    <property type="evidence" value="ECO:0007669"/>
    <property type="project" value="UniProtKB-KW"/>
</dbReference>
<dbReference type="GO" id="GO:0004383">
    <property type="term" value="F:guanylate cyclase activity"/>
    <property type="evidence" value="ECO:0000318"/>
    <property type="project" value="GO_Central"/>
</dbReference>
<dbReference type="GO" id="GO:0001653">
    <property type="term" value="F:peptide receptor activity"/>
    <property type="evidence" value="ECO:0000318"/>
    <property type="project" value="GO_Central"/>
</dbReference>
<dbReference type="GO" id="GO:0004672">
    <property type="term" value="F:protein kinase activity"/>
    <property type="evidence" value="ECO:0007669"/>
    <property type="project" value="InterPro"/>
</dbReference>
<dbReference type="GO" id="GO:0006182">
    <property type="term" value="P:cGMP biosynthetic process"/>
    <property type="evidence" value="ECO:0000318"/>
    <property type="project" value="GO_Central"/>
</dbReference>
<dbReference type="GO" id="GO:0007635">
    <property type="term" value="P:chemosensory behavior"/>
    <property type="evidence" value="ECO:0000316"/>
    <property type="project" value="UniProtKB"/>
</dbReference>
<dbReference type="GO" id="GO:0006935">
    <property type="term" value="P:chemotaxis"/>
    <property type="evidence" value="ECO:0000316"/>
    <property type="project" value="UniProtKB"/>
</dbReference>
<dbReference type="GO" id="GO:0035556">
    <property type="term" value="P:intracellular signal transduction"/>
    <property type="evidence" value="ECO:0007669"/>
    <property type="project" value="InterPro"/>
</dbReference>
<dbReference type="GO" id="GO:0007168">
    <property type="term" value="P:receptor guanylyl cyclase signaling pathway"/>
    <property type="evidence" value="ECO:0000318"/>
    <property type="project" value="GO_Central"/>
</dbReference>
<dbReference type="GO" id="GO:0032026">
    <property type="term" value="P:response to magnesium ion"/>
    <property type="evidence" value="ECO:0000316"/>
    <property type="project" value="UniProtKB"/>
</dbReference>
<dbReference type="CDD" id="cd07302">
    <property type="entry name" value="CHD"/>
    <property type="match status" value="1"/>
</dbReference>
<dbReference type="CDD" id="cd06352">
    <property type="entry name" value="PBP1_NPR_GC-like"/>
    <property type="match status" value="1"/>
</dbReference>
<dbReference type="FunFam" id="1.10.510.10:FF:000704">
    <property type="entry name" value="Guanylate cyclase"/>
    <property type="match status" value="1"/>
</dbReference>
<dbReference type="FunFam" id="3.30.70.1230:FF:000023">
    <property type="entry name" value="Guanylate cyclase"/>
    <property type="match status" value="1"/>
</dbReference>
<dbReference type="FunFam" id="3.40.50.2300:FF:000241">
    <property type="entry name" value="Guanylate cyclase"/>
    <property type="match status" value="1"/>
</dbReference>
<dbReference type="FunFam" id="3.40.50.2300:FF:000428">
    <property type="entry name" value="Guanylate cyclase"/>
    <property type="match status" value="1"/>
</dbReference>
<dbReference type="Gene3D" id="3.40.50.2300">
    <property type="match status" value="2"/>
</dbReference>
<dbReference type="Gene3D" id="3.30.70.1230">
    <property type="entry name" value="Nucleotide cyclase"/>
    <property type="match status" value="1"/>
</dbReference>
<dbReference type="Gene3D" id="1.10.510.10">
    <property type="entry name" value="Transferase(Phosphotransferase) domain 1"/>
    <property type="match status" value="1"/>
</dbReference>
<dbReference type="InterPro" id="IPR001054">
    <property type="entry name" value="A/G_cyclase"/>
</dbReference>
<dbReference type="InterPro" id="IPR018297">
    <property type="entry name" value="A/G_cyclase_CS"/>
</dbReference>
<dbReference type="InterPro" id="IPR001828">
    <property type="entry name" value="ANF_lig-bd_rcpt"/>
</dbReference>
<dbReference type="InterPro" id="IPR050401">
    <property type="entry name" value="Cyclic_nucleotide_synthase"/>
</dbReference>
<dbReference type="InterPro" id="IPR011645">
    <property type="entry name" value="HNOB_dom_associated"/>
</dbReference>
<dbReference type="InterPro" id="IPR011009">
    <property type="entry name" value="Kinase-like_dom_sf"/>
</dbReference>
<dbReference type="InterPro" id="IPR029787">
    <property type="entry name" value="Nucleotide_cyclase"/>
</dbReference>
<dbReference type="InterPro" id="IPR028082">
    <property type="entry name" value="Peripla_BP_I"/>
</dbReference>
<dbReference type="InterPro" id="IPR000719">
    <property type="entry name" value="Prot_kinase_dom"/>
</dbReference>
<dbReference type="InterPro" id="IPR001245">
    <property type="entry name" value="Ser-Thr/Tyr_kinase_cat_dom"/>
</dbReference>
<dbReference type="PANTHER" id="PTHR11920">
    <property type="entry name" value="GUANYLYL CYCLASE"/>
    <property type="match status" value="1"/>
</dbReference>
<dbReference type="PANTHER" id="PTHR11920:SF495">
    <property type="entry name" value="RECEPTOR-TYPE GUANYLATE CYCLASE GCY-7"/>
    <property type="match status" value="1"/>
</dbReference>
<dbReference type="Pfam" id="PF01094">
    <property type="entry name" value="ANF_receptor"/>
    <property type="match status" value="1"/>
</dbReference>
<dbReference type="Pfam" id="PF00211">
    <property type="entry name" value="Guanylate_cyc"/>
    <property type="match status" value="1"/>
</dbReference>
<dbReference type="Pfam" id="PF07701">
    <property type="entry name" value="HNOBA"/>
    <property type="match status" value="1"/>
</dbReference>
<dbReference type="Pfam" id="PF07714">
    <property type="entry name" value="PK_Tyr_Ser-Thr"/>
    <property type="match status" value="1"/>
</dbReference>
<dbReference type="SMART" id="SM00044">
    <property type="entry name" value="CYCc"/>
    <property type="match status" value="1"/>
</dbReference>
<dbReference type="SUPFAM" id="SSF55073">
    <property type="entry name" value="Nucleotide cyclase"/>
    <property type="match status" value="1"/>
</dbReference>
<dbReference type="SUPFAM" id="SSF53822">
    <property type="entry name" value="Periplasmic binding protein-like I"/>
    <property type="match status" value="1"/>
</dbReference>
<dbReference type="SUPFAM" id="SSF56112">
    <property type="entry name" value="Protein kinase-like (PK-like)"/>
    <property type="match status" value="1"/>
</dbReference>
<dbReference type="PROSITE" id="PS00452">
    <property type="entry name" value="GUANYLATE_CYCLASE_1"/>
    <property type="match status" value="1"/>
</dbReference>
<dbReference type="PROSITE" id="PS50125">
    <property type="entry name" value="GUANYLATE_CYCLASE_2"/>
    <property type="match status" value="1"/>
</dbReference>
<dbReference type="PROSITE" id="PS50011">
    <property type="entry name" value="PROTEIN_KINASE_DOM"/>
    <property type="match status" value="1"/>
</dbReference>